<evidence type="ECO:0000250" key="1"/>
<evidence type="ECO:0000255" key="2">
    <source>
        <dbReference type="HAMAP-Rule" id="MF_01356"/>
    </source>
</evidence>
<sequence>MAIEGVLNEGFVTTTADKLINWTRTGSLWPMTFGLACCAVEMMHAGAARYDLDRFGVVFRPSPRQSDVMIVAGTLCNKMAPALRKVYDQMAEPRWVISMGSCANGGGYYHYSYSVVRGCDRIVPVDIYVPGCPPTAEALIYGVIQLQNKIKRTNTIARKG</sequence>
<gene>
    <name evidence="2" type="primary">nuoB</name>
    <name type="ordered locus">Reut_A0962</name>
</gene>
<accession>Q473U2</accession>
<feature type="chain" id="PRO_0000358461" description="NADH-quinone oxidoreductase subunit B">
    <location>
        <begin position="1"/>
        <end position="160"/>
    </location>
</feature>
<feature type="binding site" evidence="2">
    <location>
        <position position="37"/>
    </location>
    <ligand>
        <name>[4Fe-4S] cluster</name>
        <dbReference type="ChEBI" id="CHEBI:49883"/>
    </ligand>
</feature>
<feature type="binding site" evidence="2">
    <location>
        <position position="38"/>
    </location>
    <ligand>
        <name>[4Fe-4S] cluster</name>
        <dbReference type="ChEBI" id="CHEBI:49883"/>
    </ligand>
</feature>
<feature type="binding site" evidence="2">
    <location>
        <position position="102"/>
    </location>
    <ligand>
        <name>[4Fe-4S] cluster</name>
        <dbReference type="ChEBI" id="CHEBI:49883"/>
    </ligand>
</feature>
<feature type="binding site" evidence="2">
    <location>
        <position position="132"/>
    </location>
    <ligand>
        <name>[4Fe-4S] cluster</name>
        <dbReference type="ChEBI" id="CHEBI:49883"/>
    </ligand>
</feature>
<dbReference type="EC" id="7.1.1.-" evidence="2"/>
<dbReference type="EMBL" id="CP000090">
    <property type="protein sequence ID" value="AAZ60341.1"/>
    <property type="molecule type" value="Genomic_DNA"/>
</dbReference>
<dbReference type="SMR" id="Q473U2"/>
<dbReference type="STRING" id="264198.Reut_A0962"/>
<dbReference type="KEGG" id="reu:Reut_A0962"/>
<dbReference type="eggNOG" id="COG0377">
    <property type="taxonomic scope" value="Bacteria"/>
</dbReference>
<dbReference type="HOGENOM" id="CLU_055737_7_3_4"/>
<dbReference type="OrthoDB" id="9786737at2"/>
<dbReference type="GO" id="GO:0005886">
    <property type="term" value="C:plasma membrane"/>
    <property type="evidence" value="ECO:0007669"/>
    <property type="project" value="UniProtKB-SubCell"/>
</dbReference>
<dbReference type="GO" id="GO:0045271">
    <property type="term" value="C:respiratory chain complex I"/>
    <property type="evidence" value="ECO:0007669"/>
    <property type="project" value="TreeGrafter"/>
</dbReference>
<dbReference type="GO" id="GO:0051539">
    <property type="term" value="F:4 iron, 4 sulfur cluster binding"/>
    <property type="evidence" value="ECO:0007669"/>
    <property type="project" value="UniProtKB-KW"/>
</dbReference>
<dbReference type="GO" id="GO:0005506">
    <property type="term" value="F:iron ion binding"/>
    <property type="evidence" value="ECO:0007669"/>
    <property type="project" value="UniProtKB-UniRule"/>
</dbReference>
<dbReference type="GO" id="GO:0008137">
    <property type="term" value="F:NADH dehydrogenase (ubiquinone) activity"/>
    <property type="evidence" value="ECO:0007669"/>
    <property type="project" value="InterPro"/>
</dbReference>
<dbReference type="GO" id="GO:0050136">
    <property type="term" value="F:NADH:ubiquinone reductase (non-electrogenic) activity"/>
    <property type="evidence" value="ECO:0007669"/>
    <property type="project" value="UniProtKB-UniRule"/>
</dbReference>
<dbReference type="GO" id="GO:0048038">
    <property type="term" value="F:quinone binding"/>
    <property type="evidence" value="ECO:0007669"/>
    <property type="project" value="UniProtKB-KW"/>
</dbReference>
<dbReference type="GO" id="GO:0009060">
    <property type="term" value="P:aerobic respiration"/>
    <property type="evidence" value="ECO:0007669"/>
    <property type="project" value="TreeGrafter"/>
</dbReference>
<dbReference type="GO" id="GO:0015990">
    <property type="term" value="P:electron transport coupled proton transport"/>
    <property type="evidence" value="ECO:0007669"/>
    <property type="project" value="TreeGrafter"/>
</dbReference>
<dbReference type="FunFam" id="3.40.50.12280:FF:000001">
    <property type="entry name" value="NADH-quinone oxidoreductase subunit B 2"/>
    <property type="match status" value="1"/>
</dbReference>
<dbReference type="Gene3D" id="3.40.50.12280">
    <property type="match status" value="1"/>
</dbReference>
<dbReference type="HAMAP" id="MF_01356">
    <property type="entry name" value="NDH1_NuoB"/>
    <property type="match status" value="1"/>
</dbReference>
<dbReference type="InterPro" id="IPR006137">
    <property type="entry name" value="NADH_UbQ_OxRdtase-like_20kDa"/>
</dbReference>
<dbReference type="InterPro" id="IPR006138">
    <property type="entry name" value="NADH_UQ_OxRdtase_20Kd_su"/>
</dbReference>
<dbReference type="NCBIfam" id="TIGR01957">
    <property type="entry name" value="nuoB_fam"/>
    <property type="match status" value="1"/>
</dbReference>
<dbReference type="NCBIfam" id="NF005012">
    <property type="entry name" value="PRK06411.1"/>
    <property type="match status" value="1"/>
</dbReference>
<dbReference type="PANTHER" id="PTHR11995">
    <property type="entry name" value="NADH DEHYDROGENASE"/>
    <property type="match status" value="1"/>
</dbReference>
<dbReference type="PANTHER" id="PTHR11995:SF14">
    <property type="entry name" value="NADH DEHYDROGENASE [UBIQUINONE] IRON-SULFUR PROTEIN 7, MITOCHONDRIAL"/>
    <property type="match status" value="1"/>
</dbReference>
<dbReference type="Pfam" id="PF01058">
    <property type="entry name" value="Oxidored_q6"/>
    <property type="match status" value="1"/>
</dbReference>
<dbReference type="SUPFAM" id="SSF56770">
    <property type="entry name" value="HydA/Nqo6-like"/>
    <property type="match status" value="1"/>
</dbReference>
<dbReference type="PROSITE" id="PS01150">
    <property type="entry name" value="COMPLEX1_20K"/>
    <property type="match status" value="1"/>
</dbReference>
<keyword id="KW-0004">4Fe-4S</keyword>
<keyword id="KW-0997">Cell inner membrane</keyword>
<keyword id="KW-1003">Cell membrane</keyword>
<keyword id="KW-0408">Iron</keyword>
<keyword id="KW-0411">Iron-sulfur</keyword>
<keyword id="KW-0472">Membrane</keyword>
<keyword id="KW-0479">Metal-binding</keyword>
<keyword id="KW-0520">NAD</keyword>
<keyword id="KW-0874">Quinone</keyword>
<keyword id="KW-1278">Translocase</keyword>
<keyword id="KW-0813">Transport</keyword>
<keyword id="KW-0830">Ubiquinone</keyword>
<proteinExistence type="inferred from homology"/>
<reference key="1">
    <citation type="journal article" date="2010" name="PLoS ONE">
        <title>The complete multipartite genome sequence of Cupriavidus necator JMP134, a versatile pollutant degrader.</title>
        <authorList>
            <person name="Lykidis A."/>
            <person name="Perez-Pantoja D."/>
            <person name="Ledger T."/>
            <person name="Mavromatis K."/>
            <person name="Anderson I.J."/>
            <person name="Ivanova N.N."/>
            <person name="Hooper S.D."/>
            <person name="Lapidus A."/>
            <person name="Lucas S."/>
            <person name="Gonzalez B."/>
            <person name="Kyrpides N.C."/>
        </authorList>
    </citation>
    <scope>NUCLEOTIDE SEQUENCE [LARGE SCALE GENOMIC DNA]</scope>
    <source>
        <strain>JMP134 / LMG 1197</strain>
    </source>
</reference>
<protein>
    <recommendedName>
        <fullName evidence="2">NADH-quinone oxidoreductase subunit B</fullName>
        <ecNumber evidence="2">7.1.1.-</ecNumber>
    </recommendedName>
    <alternativeName>
        <fullName evidence="2">NADH dehydrogenase I subunit B</fullName>
    </alternativeName>
    <alternativeName>
        <fullName evidence="2">NDH-1 subunit B</fullName>
    </alternativeName>
</protein>
<name>NUOB_CUPPJ</name>
<comment type="function">
    <text evidence="1">NDH-1 shuttles electrons from NADH, via FMN and iron-sulfur (Fe-S) centers, to quinones in the respiratory chain. Couples the redox reaction to proton translocation (for every two electrons transferred, four hydrogen ions are translocated across the cytoplasmic membrane), and thus conserves the redox energy in a proton gradient (By similarity).</text>
</comment>
<comment type="catalytic activity">
    <reaction evidence="2">
        <text>a quinone + NADH + 5 H(+)(in) = a quinol + NAD(+) + 4 H(+)(out)</text>
        <dbReference type="Rhea" id="RHEA:57888"/>
        <dbReference type="ChEBI" id="CHEBI:15378"/>
        <dbReference type="ChEBI" id="CHEBI:24646"/>
        <dbReference type="ChEBI" id="CHEBI:57540"/>
        <dbReference type="ChEBI" id="CHEBI:57945"/>
        <dbReference type="ChEBI" id="CHEBI:132124"/>
    </reaction>
</comment>
<comment type="cofactor">
    <cofactor evidence="2">
        <name>[4Fe-4S] cluster</name>
        <dbReference type="ChEBI" id="CHEBI:49883"/>
    </cofactor>
    <text evidence="2">Binds 1 [4Fe-4S] cluster.</text>
</comment>
<comment type="subunit">
    <text evidence="2">NDH-1 is composed of 14 different subunits. Subunits NuoB, C, D, E, F, and G constitute the peripheral sector of the complex.</text>
</comment>
<comment type="subcellular location">
    <subcellularLocation>
        <location evidence="2">Cell inner membrane</location>
        <topology evidence="2">Peripheral membrane protein</topology>
        <orientation evidence="2">Cytoplasmic side</orientation>
    </subcellularLocation>
</comment>
<comment type="similarity">
    <text evidence="2">Belongs to the complex I 20 kDa subunit family.</text>
</comment>
<organism>
    <name type="scientific">Cupriavidus pinatubonensis (strain JMP 134 / LMG 1197)</name>
    <name type="common">Cupriavidus necator (strain JMP 134)</name>
    <dbReference type="NCBI Taxonomy" id="264198"/>
    <lineage>
        <taxon>Bacteria</taxon>
        <taxon>Pseudomonadati</taxon>
        <taxon>Pseudomonadota</taxon>
        <taxon>Betaproteobacteria</taxon>
        <taxon>Burkholderiales</taxon>
        <taxon>Burkholderiaceae</taxon>
        <taxon>Cupriavidus</taxon>
    </lineage>
</organism>